<keyword id="KW-0493">Microtubule</keyword>
<keyword id="KW-0539">Nucleus</keyword>
<keyword id="KW-1185">Reference proteome</keyword>
<name>NICN1_CANLF</name>
<evidence type="ECO:0000250" key="1"/>
<accession>Q861Y6</accession>
<protein>
    <recommendedName>
        <fullName>Nicolin-1</fullName>
    </recommendedName>
    <alternativeName>
        <fullName>Tubulin polyglutamylase complex subunit 5</fullName>
        <shortName>PGs5</shortName>
    </alternativeName>
</protein>
<organism>
    <name type="scientific">Canis lupus familiaris</name>
    <name type="common">Dog</name>
    <name type="synonym">Canis familiaris</name>
    <dbReference type="NCBI Taxonomy" id="9615"/>
    <lineage>
        <taxon>Eukaryota</taxon>
        <taxon>Metazoa</taxon>
        <taxon>Chordata</taxon>
        <taxon>Craniata</taxon>
        <taxon>Vertebrata</taxon>
        <taxon>Euteleostomi</taxon>
        <taxon>Mammalia</taxon>
        <taxon>Eutheria</taxon>
        <taxon>Laurasiatheria</taxon>
        <taxon>Carnivora</taxon>
        <taxon>Caniformia</taxon>
        <taxon>Canidae</taxon>
        <taxon>Canis</taxon>
    </lineage>
</organism>
<feature type="chain" id="PRO_0000096813" description="Nicolin-1">
    <location>
        <begin position="1"/>
        <end position="213"/>
    </location>
</feature>
<gene>
    <name type="primary">NICN1</name>
</gene>
<dbReference type="EMBL" id="AJ012166">
    <property type="protein sequence ID" value="CAD79379.1"/>
    <property type="molecule type" value="Genomic_DNA"/>
</dbReference>
<dbReference type="RefSeq" id="NP_001029167.1">
    <property type="nucleotide sequence ID" value="NM_001033995.1"/>
</dbReference>
<dbReference type="FunCoup" id="Q861Y6">
    <property type="interactions" value="62"/>
</dbReference>
<dbReference type="STRING" id="9615.ENSCAFP00000016876"/>
<dbReference type="PaxDb" id="9612-ENSCAFP00000016876"/>
<dbReference type="Ensembl" id="ENSCAFT00030025557.1">
    <property type="protein sequence ID" value="ENSCAFP00030022313.1"/>
    <property type="gene ID" value="ENSCAFG00030013770.1"/>
</dbReference>
<dbReference type="Ensembl" id="ENSCAFT00040034796.1">
    <property type="protein sequence ID" value="ENSCAFP00040030295.1"/>
    <property type="gene ID" value="ENSCAFG00040018774.1"/>
</dbReference>
<dbReference type="GeneID" id="608810"/>
<dbReference type="KEGG" id="cfa:608810"/>
<dbReference type="CTD" id="84276"/>
<dbReference type="eggNOG" id="ENOG502QQWA">
    <property type="taxonomic scope" value="Eukaryota"/>
</dbReference>
<dbReference type="HOGENOM" id="CLU_114995_0_0_1"/>
<dbReference type="InParanoid" id="Q861Y6"/>
<dbReference type="OMA" id="MWVLTEV"/>
<dbReference type="OrthoDB" id="1336at33554"/>
<dbReference type="TreeFam" id="TF329753"/>
<dbReference type="Proteomes" id="UP000002254">
    <property type="component" value="Unplaced"/>
</dbReference>
<dbReference type="Proteomes" id="UP000694429">
    <property type="component" value="Chromosome 20"/>
</dbReference>
<dbReference type="Proteomes" id="UP000694542">
    <property type="component" value="Chromosome 20"/>
</dbReference>
<dbReference type="Proteomes" id="UP000805418">
    <property type="component" value="Unplaced"/>
</dbReference>
<dbReference type="Bgee" id="ENSCAFG00000011485">
    <property type="expression patterns" value="Expressed in ovary and 47 other cell types or tissues"/>
</dbReference>
<dbReference type="GO" id="GO:0005874">
    <property type="term" value="C:microtubule"/>
    <property type="evidence" value="ECO:0007669"/>
    <property type="project" value="UniProtKB-KW"/>
</dbReference>
<dbReference type="GO" id="GO:0005654">
    <property type="term" value="C:nucleoplasm"/>
    <property type="evidence" value="ECO:0000318"/>
    <property type="project" value="GO_Central"/>
</dbReference>
<dbReference type="InterPro" id="IPR040235">
    <property type="entry name" value="Nicolin-1"/>
</dbReference>
<dbReference type="PANTHER" id="PTHR31239">
    <property type="entry name" value="NICOLIN 1"/>
    <property type="match status" value="1"/>
</dbReference>
<dbReference type="PANTHER" id="PTHR31239:SF2">
    <property type="entry name" value="NICOLIN-1"/>
    <property type="match status" value="1"/>
</dbReference>
<sequence length="213" mass="24266">MSRVSVPCHVKGTVALQVGDVRTSQGRPGVLVIDVTFPSVAPFELQEIMFKNYYTAFLSIRVRQHTSTHTPAKWVTCLRDYCLMPDPHSEEGAQEYVSLFKHQMLCDMARVLELRLILRQPSPLWLSFTVEELQIYQQGPKSPSMTFPKWLSHPVPCEQPAPLIEGLPDPNRVSSEVQQMWALTEMIRASHTSTRIGRFDVDGCYDLNLLSYT</sequence>
<reference key="1">
    <citation type="journal article" date="2002" name="Eur. J. Biochem.">
        <title>Cloning and characterization of the mammalian-specific nicolin 1 gene (NICN1) encoding a nuclear 24 kDa protein.</title>
        <authorList>
            <person name="Backofen B."/>
            <person name="Jacob R."/>
            <person name="Serth K."/>
            <person name="Gossler A."/>
            <person name="Naim H.Y."/>
            <person name="Leeb T."/>
        </authorList>
    </citation>
    <scope>NUCLEOTIDE SEQUENCE [GENOMIC DNA]</scope>
</reference>
<proteinExistence type="inferred from homology"/>
<comment type="subunit">
    <text evidence="1">Part of the neuronal tubulin polyglutamylase complex which contains TPGS1, TPGS2, TTLL1, LRRC49 and NICN1.</text>
</comment>
<comment type="subcellular location">
    <subcellularLocation>
        <location evidence="1">Nucleus</location>
    </subcellularLocation>
</comment>